<protein>
    <recommendedName>
        <fullName evidence="4">Heme oxygenase (mycobilin-producing)</fullName>
        <ecNumber evidence="2 3">1.14.99.57</ecNumber>
    </recommendedName>
    <alternativeName>
        <fullName>Mycobacterial heme utilization, degrader</fullName>
        <shortName>MHUD</shortName>
    </alternativeName>
</protein>
<accession>P9WKH3</accession>
<accession>F2GKD2</accession>
<accession>O06156</accession>
<accession>Q7D578</accession>
<gene>
    <name type="primary">mhuD</name>
    <name type="ordered locus">Rv3592</name>
</gene>
<evidence type="ECO:0000255" key="1"/>
<evidence type="ECO:0000269" key="2">
    <source>
    </source>
</evidence>
<evidence type="ECO:0000269" key="3">
    <source>
    </source>
</evidence>
<evidence type="ECO:0000305" key="4"/>
<evidence type="ECO:0000305" key="5">
    <source>
    </source>
</evidence>
<evidence type="ECO:0007829" key="6">
    <source>
        <dbReference type="PDB" id="3HX9"/>
    </source>
</evidence>
<comment type="function">
    <text evidence="2 3">Catalyzes the oxidative degradation of the heme macrocyclic porphyrin ring in the presence of a suitable electron donor such as ascorbate or NADPH--cytochrome P450 reductase, with subsequent release of free iron.</text>
</comment>
<comment type="catalytic activity">
    <reaction evidence="2 3">
        <text>heme b + 3 AH2 + 3 O2 + 2 H(+) = mycobilin a + Fe(2+) + 3 A + 3 H2O</text>
        <dbReference type="Rhea" id="RHEA:52232"/>
        <dbReference type="ChEBI" id="CHEBI:13193"/>
        <dbReference type="ChEBI" id="CHEBI:15377"/>
        <dbReference type="ChEBI" id="CHEBI:15378"/>
        <dbReference type="ChEBI" id="CHEBI:15379"/>
        <dbReference type="ChEBI" id="CHEBI:17499"/>
        <dbReference type="ChEBI" id="CHEBI:29033"/>
        <dbReference type="ChEBI" id="CHEBI:60344"/>
        <dbReference type="ChEBI" id="CHEBI:136507"/>
        <dbReference type="EC" id="1.14.99.57"/>
    </reaction>
</comment>
<comment type="catalytic activity">
    <reaction evidence="2 3">
        <text>heme b + 3 AH2 + 3 O2 + 2 H(+) = mycobilin b + Fe(2+) + 3 A + 3 H2O</text>
        <dbReference type="Rhea" id="RHEA:52236"/>
        <dbReference type="ChEBI" id="CHEBI:13193"/>
        <dbReference type="ChEBI" id="CHEBI:15377"/>
        <dbReference type="ChEBI" id="CHEBI:15378"/>
        <dbReference type="ChEBI" id="CHEBI:15379"/>
        <dbReference type="ChEBI" id="CHEBI:17499"/>
        <dbReference type="ChEBI" id="CHEBI:29033"/>
        <dbReference type="ChEBI" id="CHEBI:60344"/>
        <dbReference type="ChEBI" id="CHEBI:136508"/>
        <dbReference type="EC" id="1.14.99.57"/>
    </reaction>
</comment>
<comment type="subunit">
    <text evidence="2">Homodimer.</text>
</comment>
<comment type="miscellaneous">
    <text evidence="3 5">MhuD has the ability to bind 2 heme molecules per monomer but only the monoheme-protein complex is active.</text>
</comment>
<comment type="similarity">
    <text evidence="4">Belongs to the antibiotic biosynthesis monooxygenase family.</text>
</comment>
<keyword id="KW-0002">3D-structure</keyword>
<keyword id="KW-0349">Heme</keyword>
<keyword id="KW-0408">Iron</keyword>
<keyword id="KW-0479">Metal-binding</keyword>
<keyword id="KW-0503">Monooxygenase</keyword>
<keyword id="KW-0560">Oxidoreductase</keyword>
<keyword id="KW-1185">Reference proteome</keyword>
<feature type="chain" id="PRO_0000422665" description="Heme oxygenase (mycobilin-producing)">
    <location>
        <begin position="1"/>
        <end position="105"/>
    </location>
</feature>
<feature type="domain" description="ABM">
    <location>
        <begin position="3"/>
        <end position="92"/>
    </location>
</feature>
<feature type="binding site">
    <location>
        <begin position="22"/>
        <end position="26"/>
    </location>
    <ligand>
        <name>heme</name>
        <dbReference type="ChEBI" id="CHEBI:30413"/>
    </ligand>
</feature>
<feature type="binding site" description="axial binding residue">
    <location>
        <position position="75"/>
    </location>
    <ligand>
        <name>heme</name>
        <dbReference type="ChEBI" id="CHEBI:30413"/>
    </ligand>
    <ligandPart>
        <name>Fe</name>
        <dbReference type="ChEBI" id="CHEBI:18248"/>
    </ligandPart>
</feature>
<feature type="binding site">
    <location>
        <begin position="83"/>
        <end position="86"/>
    </location>
    <ligand>
        <name>heme</name>
        <dbReference type="ChEBI" id="CHEBI:30413"/>
    </ligand>
</feature>
<feature type="site" description="Transition state stabilizer" evidence="1">
    <location>
        <position position="66"/>
    </location>
</feature>
<feature type="mutagenesis site" description="Inactive." evidence="3">
    <original>N</original>
    <variation>A</variation>
    <location>
        <position position="7"/>
    </location>
</feature>
<feature type="mutagenesis site" description="Inactive." evidence="3">
    <original>H</original>
    <variation>A</variation>
    <location>
        <position position="75"/>
    </location>
</feature>
<feature type="strand" evidence="6">
    <location>
        <begin position="3"/>
        <end position="9"/>
    </location>
</feature>
<feature type="helix" evidence="6">
    <location>
        <begin position="16"/>
        <end position="25"/>
    </location>
</feature>
<feature type="turn" evidence="6">
    <location>
        <begin position="26"/>
        <end position="32"/>
    </location>
</feature>
<feature type="strand" evidence="6">
    <location>
        <begin position="36"/>
        <end position="47"/>
    </location>
</feature>
<feature type="strand" evidence="6">
    <location>
        <begin position="50"/>
        <end position="58"/>
    </location>
</feature>
<feature type="helix" evidence="6">
    <location>
        <begin position="60"/>
        <end position="68"/>
    </location>
</feature>
<feature type="helix" evidence="6">
    <location>
        <begin position="70"/>
        <end position="73"/>
    </location>
</feature>
<feature type="turn" evidence="6">
    <location>
        <begin position="74"/>
        <end position="77"/>
    </location>
</feature>
<feature type="strand" evidence="6">
    <location>
        <begin position="87"/>
        <end position="100"/>
    </location>
</feature>
<sequence length="105" mass="11185">MPVVKINAIEVPAGAGPELEKRFAHRAHAVENSPGFLGFQLLRPVKGEERYFVVTHWESDEAFQAWANGPAIAAHAGHRANPVATGASLLEFEVVLDVGGTGKTA</sequence>
<dbReference type="EC" id="1.14.99.57" evidence="2 3"/>
<dbReference type="EMBL" id="AL123456">
    <property type="protein sequence ID" value="CCP46415.1"/>
    <property type="molecule type" value="Genomic_DNA"/>
</dbReference>
<dbReference type="PIR" id="E70552">
    <property type="entry name" value="E70552"/>
</dbReference>
<dbReference type="RefSeq" id="NP_218109.1">
    <property type="nucleotide sequence ID" value="NC_000962.3"/>
</dbReference>
<dbReference type="RefSeq" id="WP_003419501.1">
    <property type="nucleotide sequence ID" value="NZ_NVQJ01000092.1"/>
</dbReference>
<dbReference type="PDB" id="3HX9">
    <property type="method" value="X-ray"/>
    <property type="resolution" value="1.75 A"/>
    <property type="chains" value="A/B=1-105"/>
</dbReference>
<dbReference type="PDB" id="4NL5">
    <property type="method" value="X-ray"/>
    <property type="resolution" value="1.90 A"/>
    <property type="chains" value="A/B=1-105"/>
</dbReference>
<dbReference type="PDB" id="5UQ4">
    <property type="method" value="X-ray"/>
    <property type="resolution" value="2.20 A"/>
    <property type="chains" value="A/B=1-105"/>
</dbReference>
<dbReference type="PDB" id="6DS7">
    <property type="method" value="X-ray"/>
    <property type="resolution" value="1.90 A"/>
    <property type="chains" value="A/B=2-100"/>
</dbReference>
<dbReference type="PDB" id="6DS8">
    <property type="method" value="X-ray"/>
    <property type="resolution" value="2.40 A"/>
    <property type="chains" value="A/B=2-100"/>
</dbReference>
<dbReference type="PDB" id="6PLE">
    <property type="method" value="X-ray"/>
    <property type="resolution" value="2.50 A"/>
    <property type="chains" value="A/B=1-105"/>
</dbReference>
<dbReference type="PDBsum" id="3HX9"/>
<dbReference type="PDBsum" id="4NL5"/>
<dbReference type="PDBsum" id="5UQ4"/>
<dbReference type="PDBsum" id="6DS7"/>
<dbReference type="PDBsum" id="6DS8"/>
<dbReference type="PDBsum" id="6PLE"/>
<dbReference type="SMR" id="P9WKH3"/>
<dbReference type="STRING" id="83332.Rv3592"/>
<dbReference type="PaxDb" id="83332-Rv3592"/>
<dbReference type="DNASU" id="886278"/>
<dbReference type="GeneID" id="45427579"/>
<dbReference type="GeneID" id="886278"/>
<dbReference type="KEGG" id="mtu:Rv3592"/>
<dbReference type="KEGG" id="mtv:RVBD_3592"/>
<dbReference type="TubercuList" id="Rv3592"/>
<dbReference type="eggNOG" id="COG2329">
    <property type="taxonomic scope" value="Bacteria"/>
</dbReference>
<dbReference type="InParanoid" id="P9WKH3"/>
<dbReference type="OrthoDB" id="5518003at2"/>
<dbReference type="PhylomeDB" id="P9WKH3"/>
<dbReference type="BioCyc" id="MetaCyc:G185E-7870-MONOMER"/>
<dbReference type="BRENDA" id="1.14.99.57">
    <property type="organism ID" value="3445"/>
</dbReference>
<dbReference type="EvolutionaryTrace" id="P9WKH3"/>
<dbReference type="Proteomes" id="UP000001584">
    <property type="component" value="Chromosome"/>
</dbReference>
<dbReference type="GO" id="GO:0009274">
    <property type="term" value="C:peptidoglycan-based cell wall"/>
    <property type="evidence" value="ECO:0007005"/>
    <property type="project" value="MTBBASE"/>
</dbReference>
<dbReference type="GO" id="GO:0005886">
    <property type="term" value="C:plasma membrane"/>
    <property type="evidence" value="ECO:0007005"/>
    <property type="project" value="MTBBASE"/>
</dbReference>
<dbReference type="GO" id="GO:0020037">
    <property type="term" value="F:heme binding"/>
    <property type="evidence" value="ECO:0000314"/>
    <property type="project" value="MTBBASE"/>
</dbReference>
<dbReference type="GO" id="GO:0004392">
    <property type="term" value="F:heme oxygenase (decyclizing) activity"/>
    <property type="evidence" value="ECO:0000314"/>
    <property type="project" value="UniProtKB"/>
</dbReference>
<dbReference type="GO" id="GO:0046872">
    <property type="term" value="F:metal ion binding"/>
    <property type="evidence" value="ECO:0007669"/>
    <property type="project" value="UniProtKB-KW"/>
</dbReference>
<dbReference type="GO" id="GO:0042167">
    <property type="term" value="P:heme catabolic process"/>
    <property type="evidence" value="ECO:0000314"/>
    <property type="project" value="MTBBASE"/>
</dbReference>
<dbReference type="FunFam" id="3.30.70.100:FF:000048">
    <property type="entry name" value="Antibiotic biosynthesis monooxygenase"/>
    <property type="match status" value="1"/>
</dbReference>
<dbReference type="Gene3D" id="3.30.70.100">
    <property type="match status" value="1"/>
</dbReference>
<dbReference type="InterPro" id="IPR007138">
    <property type="entry name" value="ABM_dom"/>
</dbReference>
<dbReference type="InterPro" id="IPR011008">
    <property type="entry name" value="Dimeric_a/b-barrel"/>
</dbReference>
<dbReference type="InterPro" id="IPR050404">
    <property type="entry name" value="Heme-degrading_MO"/>
</dbReference>
<dbReference type="PANTHER" id="PTHR34474">
    <property type="entry name" value="SIGNAL TRANSDUCTION PROTEIN TRAP"/>
    <property type="match status" value="1"/>
</dbReference>
<dbReference type="PANTHER" id="PTHR34474:SF2">
    <property type="entry name" value="SIGNAL TRANSDUCTION PROTEIN TRAP"/>
    <property type="match status" value="1"/>
</dbReference>
<dbReference type="Pfam" id="PF03992">
    <property type="entry name" value="ABM"/>
    <property type="match status" value="1"/>
</dbReference>
<dbReference type="SUPFAM" id="SSF54909">
    <property type="entry name" value="Dimeric alpha+beta barrel"/>
    <property type="match status" value="1"/>
</dbReference>
<dbReference type="PROSITE" id="PS51725">
    <property type="entry name" value="ABM"/>
    <property type="match status" value="1"/>
</dbReference>
<reference key="1">
    <citation type="journal article" date="1998" name="Nature">
        <title>Deciphering the biology of Mycobacterium tuberculosis from the complete genome sequence.</title>
        <authorList>
            <person name="Cole S.T."/>
            <person name="Brosch R."/>
            <person name="Parkhill J."/>
            <person name="Garnier T."/>
            <person name="Churcher C.M."/>
            <person name="Harris D.E."/>
            <person name="Gordon S.V."/>
            <person name="Eiglmeier K."/>
            <person name="Gas S."/>
            <person name="Barry C.E. III"/>
            <person name="Tekaia F."/>
            <person name="Badcock K."/>
            <person name="Basham D."/>
            <person name="Brown D."/>
            <person name="Chillingworth T."/>
            <person name="Connor R."/>
            <person name="Davies R.M."/>
            <person name="Devlin K."/>
            <person name="Feltwell T."/>
            <person name="Gentles S."/>
            <person name="Hamlin N."/>
            <person name="Holroyd S."/>
            <person name="Hornsby T."/>
            <person name="Jagels K."/>
            <person name="Krogh A."/>
            <person name="McLean J."/>
            <person name="Moule S."/>
            <person name="Murphy L.D."/>
            <person name="Oliver S."/>
            <person name="Osborne J."/>
            <person name="Quail M.A."/>
            <person name="Rajandream M.A."/>
            <person name="Rogers J."/>
            <person name="Rutter S."/>
            <person name="Seeger K."/>
            <person name="Skelton S."/>
            <person name="Squares S."/>
            <person name="Squares R."/>
            <person name="Sulston J.E."/>
            <person name="Taylor K."/>
            <person name="Whitehead S."/>
            <person name="Barrell B.G."/>
        </authorList>
    </citation>
    <scope>NUCLEOTIDE SEQUENCE [LARGE SCALE GENOMIC DNA]</scope>
    <source>
        <strain>ATCC 25618 / H37Rv</strain>
    </source>
</reference>
<reference key="2">
    <citation type="journal article" date="2011" name="Mol. Cell. Proteomics">
        <title>Proteogenomic analysis of Mycobacterium tuberculosis by high resolution mass spectrometry.</title>
        <authorList>
            <person name="Kelkar D.S."/>
            <person name="Kumar D."/>
            <person name="Kumar P."/>
            <person name="Balakrishnan L."/>
            <person name="Muthusamy B."/>
            <person name="Yadav A.K."/>
            <person name="Shrivastava P."/>
            <person name="Marimuthu A."/>
            <person name="Anand S."/>
            <person name="Sundaram H."/>
            <person name="Kingsbury R."/>
            <person name="Harsha H.C."/>
            <person name="Nair B."/>
            <person name="Prasad T.S."/>
            <person name="Chauhan D.S."/>
            <person name="Katoch K."/>
            <person name="Katoch V.M."/>
            <person name="Kumar P."/>
            <person name="Chaerkady R."/>
            <person name="Ramachandran S."/>
            <person name="Dash D."/>
            <person name="Pandey A."/>
        </authorList>
    </citation>
    <scope>IDENTIFICATION BY MASS SPECTROMETRY [LARGE SCALE ANALYSIS]</scope>
    <source>
        <strain>ATCC 25618 / H37Rv</strain>
    </source>
</reference>
<reference key="3">
    <citation type="journal article" date="2013" name="J. Biol. Chem.">
        <title>A new way to degrade heme: the Mycobacterium tuberculosis enzyme MhuD catalyzes heme degradation without generating CO.</title>
        <authorList>
            <person name="Nambu S."/>
            <person name="Matsui T."/>
            <person name="Goulding C.W."/>
            <person name="Takahashi S."/>
            <person name="Ikeda-Saito M."/>
        </authorList>
    </citation>
    <scope>FUNCTION</scope>
    <scope>CATALYTIC ACTIVITY</scope>
    <scope>NMR; EPR AND RAMAN SPECTROMETRY</scope>
    <scope>HEME BINDING</scope>
    <scope>MUTAGENESIS OF ASN-7 AND HIS-75</scope>
</reference>
<reference key="4">
    <citation type="journal article" date="2010" name="J. Mol. Biol.">
        <title>Unusual diheme conformation of the heme-degrading protein from Mycobacterium tuberculosis.</title>
        <authorList>
            <person name="Chim N."/>
            <person name="Iniguez A."/>
            <person name="Nguyen T.Q."/>
            <person name="Goulding C.W."/>
        </authorList>
    </citation>
    <scope>X-RAY CRYSTALLOGRAPHY (1.75 ANGSTROMS) IN COMPLEX WITH HEME</scope>
    <scope>FUNCTION</scope>
    <scope>CATALYTIC ACTIVITY</scope>
    <scope>SUBUNIT</scope>
    <scope>NOMENCLATURE</scope>
</reference>
<reference key="5">
    <citation type="journal article" date="2014" name="Inorg. Chem.">
        <title>Crystallographic and spectroscopic insights into heme degradation by Mycobacterium tuberculosis MhuD.</title>
        <authorList>
            <person name="Graves A.B."/>
            <person name="Morse R.P."/>
            <person name="Chao A."/>
            <person name="Iniguez A."/>
            <person name="Goulding C.W."/>
            <person name="Liptak M.D."/>
        </authorList>
    </citation>
    <scope>X-RAY CRYSTALLOGRAPHY (1.9 ANGSTROMS) IN COMPLEX WITH HEME AND CYANIDE</scope>
</reference>
<name>MHUD_MYCTU</name>
<proteinExistence type="evidence at protein level"/>
<organism>
    <name type="scientific">Mycobacterium tuberculosis (strain ATCC 25618 / H37Rv)</name>
    <dbReference type="NCBI Taxonomy" id="83332"/>
    <lineage>
        <taxon>Bacteria</taxon>
        <taxon>Bacillati</taxon>
        <taxon>Actinomycetota</taxon>
        <taxon>Actinomycetes</taxon>
        <taxon>Mycobacteriales</taxon>
        <taxon>Mycobacteriaceae</taxon>
        <taxon>Mycobacterium</taxon>
        <taxon>Mycobacterium tuberculosis complex</taxon>
    </lineage>
</organism>